<keyword id="KW-0067">ATP-binding</keyword>
<keyword id="KW-0963">Cytoplasm</keyword>
<keyword id="KW-0418">Kinase</keyword>
<keyword id="KW-0460">Magnesium</keyword>
<keyword id="KW-0479">Metal-binding</keyword>
<keyword id="KW-0546">Nucleotide metabolism</keyword>
<keyword id="KW-0547">Nucleotide-binding</keyword>
<keyword id="KW-0597">Phosphoprotein</keyword>
<keyword id="KW-1185">Reference proteome</keyword>
<keyword id="KW-0808">Transferase</keyword>
<protein>
    <recommendedName>
        <fullName evidence="1">Nucleoside diphosphate kinase</fullName>
        <shortName evidence="1">NDK</shortName>
        <shortName evidence="1">NDP kinase</shortName>
        <ecNumber evidence="1">2.7.4.6</ecNumber>
    </recommendedName>
    <alternativeName>
        <fullName evidence="1">Nucleoside-2-P kinase</fullName>
    </alternativeName>
</protein>
<sequence>MEREFVMIKPDGVKRGLVGEIISRIERKGLKIVAMKMLKLDREMAERLYEEHKGKPFFDDLISYVTSGPVVAMVVEGPNAVEVMRRMIGDTDGAKAAPGTIRGDFALSKARNVVHATDSPEKVAREMSIFFRDDEIVEGYELCHSIY</sequence>
<organism>
    <name type="scientific">Ignicoccus hospitalis (strain KIN4/I / DSM 18386 / JCM 14125)</name>
    <dbReference type="NCBI Taxonomy" id="453591"/>
    <lineage>
        <taxon>Archaea</taxon>
        <taxon>Thermoproteota</taxon>
        <taxon>Thermoprotei</taxon>
        <taxon>Desulfurococcales</taxon>
        <taxon>Desulfurococcaceae</taxon>
        <taxon>Ignicoccus</taxon>
    </lineage>
</organism>
<name>NDK_IGNH4</name>
<reference key="1">
    <citation type="journal article" date="2008" name="Genome Biol.">
        <title>A genomic analysis of the archaeal system Ignicoccus hospitalis-Nanoarchaeum equitans.</title>
        <authorList>
            <person name="Podar M."/>
            <person name="Anderson I."/>
            <person name="Makarova K.S."/>
            <person name="Elkins J.G."/>
            <person name="Ivanova N."/>
            <person name="Wall M.A."/>
            <person name="Lykidis A."/>
            <person name="Mavromatis K."/>
            <person name="Sun H."/>
            <person name="Hudson M.E."/>
            <person name="Chen W."/>
            <person name="Deciu C."/>
            <person name="Hutchison D."/>
            <person name="Eads J.R."/>
            <person name="Anderson A."/>
            <person name="Fernandes F."/>
            <person name="Szeto E."/>
            <person name="Lapidus A."/>
            <person name="Kyrpides N.C."/>
            <person name="Saier M.H. Jr."/>
            <person name="Richardson P.M."/>
            <person name="Rachel R."/>
            <person name="Huber H."/>
            <person name="Eisen J.A."/>
            <person name="Koonin E.V."/>
            <person name="Keller M."/>
            <person name="Stetter K.O."/>
        </authorList>
    </citation>
    <scope>NUCLEOTIDE SEQUENCE [LARGE SCALE GENOMIC DNA]</scope>
    <source>
        <strain>KIN4/I / DSM 18386 / JCM 14125</strain>
    </source>
</reference>
<feature type="chain" id="PRO_1000072363" description="Nucleoside diphosphate kinase">
    <location>
        <begin position="1"/>
        <end position="147"/>
    </location>
</feature>
<feature type="active site" description="Pros-phosphohistidine intermediate" evidence="1">
    <location>
        <position position="115"/>
    </location>
</feature>
<feature type="binding site" evidence="1">
    <location>
        <position position="9"/>
    </location>
    <ligand>
        <name>ATP</name>
        <dbReference type="ChEBI" id="CHEBI:30616"/>
    </ligand>
</feature>
<feature type="binding site" evidence="1">
    <location>
        <position position="57"/>
    </location>
    <ligand>
        <name>ATP</name>
        <dbReference type="ChEBI" id="CHEBI:30616"/>
    </ligand>
</feature>
<feature type="binding site" evidence="1">
    <location>
        <position position="85"/>
    </location>
    <ligand>
        <name>ATP</name>
        <dbReference type="ChEBI" id="CHEBI:30616"/>
    </ligand>
</feature>
<feature type="binding site" evidence="1">
    <location>
        <position position="91"/>
    </location>
    <ligand>
        <name>ATP</name>
        <dbReference type="ChEBI" id="CHEBI:30616"/>
    </ligand>
</feature>
<feature type="binding site" evidence="1">
    <location>
        <position position="102"/>
    </location>
    <ligand>
        <name>ATP</name>
        <dbReference type="ChEBI" id="CHEBI:30616"/>
    </ligand>
</feature>
<feature type="binding site" evidence="1">
    <location>
        <position position="112"/>
    </location>
    <ligand>
        <name>ATP</name>
        <dbReference type="ChEBI" id="CHEBI:30616"/>
    </ligand>
</feature>
<evidence type="ECO:0000255" key="1">
    <source>
        <dbReference type="HAMAP-Rule" id="MF_00451"/>
    </source>
</evidence>
<comment type="function">
    <text evidence="1">Major role in the synthesis of nucleoside triphosphates other than ATP. The ATP gamma phosphate is transferred to the NDP beta phosphate via a ping-pong mechanism, using a phosphorylated active-site intermediate.</text>
</comment>
<comment type="catalytic activity">
    <reaction evidence="1">
        <text>a 2'-deoxyribonucleoside 5'-diphosphate + ATP = a 2'-deoxyribonucleoside 5'-triphosphate + ADP</text>
        <dbReference type="Rhea" id="RHEA:44640"/>
        <dbReference type="ChEBI" id="CHEBI:30616"/>
        <dbReference type="ChEBI" id="CHEBI:61560"/>
        <dbReference type="ChEBI" id="CHEBI:73316"/>
        <dbReference type="ChEBI" id="CHEBI:456216"/>
        <dbReference type="EC" id="2.7.4.6"/>
    </reaction>
</comment>
<comment type="catalytic activity">
    <reaction evidence="1">
        <text>a ribonucleoside 5'-diphosphate + ATP = a ribonucleoside 5'-triphosphate + ADP</text>
        <dbReference type="Rhea" id="RHEA:18113"/>
        <dbReference type="ChEBI" id="CHEBI:30616"/>
        <dbReference type="ChEBI" id="CHEBI:57930"/>
        <dbReference type="ChEBI" id="CHEBI:61557"/>
        <dbReference type="ChEBI" id="CHEBI:456216"/>
        <dbReference type="EC" id="2.7.4.6"/>
    </reaction>
</comment>
<comment type="cofactor">
    <cofactor evidence="1">
        <name>Mg(2+)</name>
        <dbReference type="ChEBI" id="CHEBI:18420"/>
    </cofactor>
</comment>
<comment type="subcellular location">
    <subcellularLocation>
        <location evidence="1">Cytoplasm</location>
    </subcellularLocation>
</comment>
<comment type="similarity">
    <text evidence="1">Belongs to the NDK family.</text>
</comment>
<accession>A8AAF5</accession>
<dbReference type="EC" id="2.7.4.6" evidence="1"/>
<dbReference type="EMBL" id="CP000816">
    <property type="protein sequence ID" value="ABU81907.1"/>
    <property type="molecule type" value="Genomic_DNA"/>
</dbReference>
<dbReference type="RefSeq" id="WP_011998759.1">
    <property type="nucleotide sequence ID" value="NC_009776.1"/>
</dbReference>
<dbReference type="SMR" id="A8AAF5"/>
<dbReference type="STRING" id="453591.Igni_0725"/>
<dbReference type="GeneID" id="5562530"/>
<dbReference type="KEGG" id="iho:Igni_0725"/>
<dbReference type="eggNOG" id="arCOG04313">
    <property type="taxonomic scope" value="Archaea"/>
</dbReference>
<dbReference type="HOGENOM" id="CLU_060216_6_3_2"/>
<dbReference type="OrthoDB" id="6874at2157"/>
<dbReference type="PhylomeDB" id="A8AAF5"/>
<dbReference type="Proteomes" id="UP000000262">
    <property type="component" value="Chromosome"/>
</dbReference>
<dbReference type="GO" id="GO:0005737">
    <property type="term" value="C:cytoplasm"/>
    <property type="evidence" value="ECO:0007669"/>
    <property type="project" value="UniProtKB-SubCell"/>
</dbReference>
<dbReference type="GO" id="GO:0005524">
    <property type="term" value="F:ATP binding"/>
    <property type="evidence" value="ECO:0007669"/>
    <property type="project" value="UniProtKB-UniRule"/>
</dbReference>
<dbReference type="GO" id="GO:0046872">
    <property type="term" value="F:metal ion binding"/>
    <property type="evidence" value="ECO:0007669"/>
    <property type="project" value="UniProtKB-KW"/>
</dbReference>
<dbReference type="GO" id="GO:0004550">
    <property type="term" value="F:nucleoside diphosphate kinase activity"/>
    <property type="evidence" value="ECO:0007669"/>
    <property type="project" value="UniProtKB-UniRule"/>
</dbReference>
<dbReference type="GO" id="GO:0006241">
    <property type="term" value="P:CTP biosynthetic process"/>
    <property type="evidence" value="ECO:0007669"/>
    <property type="project" value="UniProtKB-UniRule"/>
</dbReference>
<dbReference type="GO" id="GO:0006183">
    <property type="term" value="P:GTP biosynthetic process"/>
    <property type="evidence" value="ECO:0007669"/>
    <property type="project" value="UniProtKB-UniRule"/>
</dbReference>
<dbReference type="GO" id="GO:0006228">
    <property type="term" value="P:UTP biosynthetic process"/>
    <property type="evidence" value="ECO:0007669"/>
    <property type="project" value="UniProtKB-UniRule"/>
</dbReference>
<dbReference type="CDD" id="cd04413">
    <property type="entry name" value="NDPk_I"/>
    <property type="match status" value="1"/>
</dbReference>
<dbReference type="FunFam" id="3.30.70.141:FF:000003">
    <property type="entry name" value="Nucleoside diphosphate kinase"/>
    <property type="match status" value="1"/>
</dbReference>
<dbReference type="Gene3D" id="3.30.70.141">
    <property type="entry name" value="Nucleoside diphosphate kinase-like domain"/>
    <property type="match status" value="1"/>
</dbReference>
<dbReference type="HAMAP" id="MF_00451">
    <property type="entry name" value="NDP_kinase"/>
    <property type="match status" value="1"/>
</dbReference>
<dbReference type="InterPro" id="IPR034907">
    <property type="entry name" value="NDK-like_dom"/>
</dbReference>
<dbReference type="InterPro" id="IPR036850">
    <property type="entry name" value="NDK-like_dom_sf"/>
</dbReference>
<dbReference type="InterPro" id="IPR001564">
    <property type="entry name" value="Nucleoside_diP_kinase"/>
</dbReference>
<dbReference type="NCBIfam" id="NF001908">
    <property type="entry name" value="PRK00668.1"/>
    <property type="match status" value="1"/>
</dbReference>
<dbReference type="PANTHER" id="PTHR11349">
    <property type="entry name" value="NUCLEOSIDE DIPHOSPHATE KINASE"/>
    <property type="match status" value="1"/>
</dbReference>
<dbReference type="Pfam" id="PF00334">
    <property type="entry name" value="NDK"/>
    <property type="match status" value="1"/>
</dbReference>
<dbReference type="PRINTS" id="PR01243">
    <property type="entry name" value="NUCDPKINASE"/>
</dbReference>
<dbReference type="SMART" id="SM00562">
    <property type="entry name" value="NDK"/>
    <property type="match status" value="1"/>
</dbReference>
<dbReference type="SUPFAM" id="SSF54919">
    <property type="entry name" value="Nucleoside diphosphate kinase, NDK"/>
    <property type="match status" value="1"/>
</dbReference>
<dbReference type="PROSITE" id="PS51374">
    <property type="entry name" value="NDPK_LIKE"/>
    <property type="match status" value="1"/>
</dbReference>
<gene>
    <name evidence="1" type="primary">ndk</name>
    <name type="ordered locus">Igni_0725</name>
</gene>
<proteinExistence type="inferred from homology"/>